<reference key="1">
    <citation type="submission" date="2006-03" db="EMBL/GenBank/DDBJ databases">
        <title>Complete sequence of chromosome of Nitrobacter hamburgensis X14.</title>
        <authorList>
            <consortium name="US DOE Joint Genome Institute"/>
            <person name="Copeland A."/>
            <person name="Lucas S."/>
            <person name="Lapidus A."/>
            <person name="Barry K."/>
            <person name="Detter J.C."/>
            <person name="Glavina del Rio T."/>
            <person name="Hammon N."/>
            <person name="Israni S."/>
            <person name="Dalin E."/>
            <person name="Tice H."/>
            <person name="Pitluck S."/>
            <person name="Chain P."/>
            <person name="Malfatti S."/>
            <person name="Shin M."/>
            <person name="Vergez L."/>
            <person name="Schmutz J."/>
            <person name="Larimer F."/>
            <person name="Land M."/>
            <person name="Hauser L."/>
            <person name="Kyrpides N."/>
            <person name="Ivanova N."/>
            <person name="Ward B."/>
            <person name="Arp D."/>
            <person name="Klotz M."/>
            <person name="Stein L."/>
            <person name="O'Mullan G."/>
            <person name="Starkenburg S."/>
            <person name="Sayavedra L."/>
            <person name="Poret-Peterson A.T."/>
            <person name="Gentry M.E."/>
            <person name="Bruce D."/>
            <person name="Richardson P."/>
        </authorList>
    </citation>
    <scope>NUCLEOTIDE SEQUENCE [LARGE SCALE GENOMIC DNA]</scope>
    <source>
        <strain>DSM 10229 / NCIMB 13809 / X14</strain>
    </source>
</reference>
<sequence>MDIRAAEISAILKDQIKNFGQEAEVSEVGQVLSVGDGIARVYGLDNIQAGEMVEFENGTRGMALNLETDNVGIVIFGADREIKEGQTVKRTRAIVDAPVGKGLLGRVVDALGNPIDGKGPIQATERKRVDVKAPGIIPRKSVNEPMATGLKSIDALIPVGRGQRELIIGDRQTGKTAIALDTILNQKPLNVAGAPEGQKLYCVYVAIGQKRSTVAQFVKVLEEQGALEYSIIVAATASDPAPMQYIAPFTGCTMGEYFRDNGMHAVIIYDDLSKQAVAYRQMSLLLRRPPGREAYPGDVFYLHSRLLERAAKLNDDHGNGSLTALPVIETQANDVSAYIPTNVISITDGQIFLETDLFFQGIRPAVNVGLSVSRVGSSAQTKAMKKVAGKIKGELAQYREMAAFAQFGSDLDASTQRLLNRGSRLTELLKQPQFSPLKMEEQVCVIWAGTNGYLDKLPLGKVRAFEDGLLSLLRGKNVEILNTIRESRDLSDDTAAKLRSAVDGYAKTFV</sequence>
<feature type="chain" id="PRO_0000256099" description="ATP synthase subunit alpha">
    <location>
        <begin position="1"/>
        <end position="510"/>
    </location>
</feature>
<feature type="binding site" evidence="1">
    <location>
        <begin position="169"/>
        <end position="176"/>
    </location>
    <ligand>
        <name>ATP</name>
        <dbReference type="ChEBI" id="CHEBI:30616"/>
    </ligand>
</feature>
<feature type="site" description="Required for activity" evidence="1">
    <location>
        <position position="371"/>
    </location>
</feature>
<proteinExistence type="inferred from homology"/>
<accession>Q1QQS5</accession>
<dbReference type="EC" id="7.1.2.2" evidence="1"/>
<dbReference type="EMBL" id="CP000319">
    <property type="protein sequence ID" value="ABE61422.1"/>
    <property type="molecule type" value="Genomic_DNA"/>
</dbReference>
<dbReference type="RefSeq" id="WP_011509126.1">
    <property type="nucleotide sequence ID" value="NC_007964.1"/>
</dbReference>
<dbReference type="SMR" id="Q1QQS5"/>
<dbReference type="STRING" id="323097.Nham_0532"/>
<dbReference type="KEGG" id="nha:Nham_0532"/>
<dbReference type="eggNOG" id="COG0056">
    <property type="taxonomic scope" value="Bacteria"/>
</dbReference>
<dbReference type="HOGENOM" id="CLU_010091_2_1_5"/>
<dbReference type="OrthoDB" id="9803053at2"/>
<dbReference type="Proteomes" id="UP000001953">
    <property type="component" value="Chromosome"/>
</dbReference>
<dbReference type="GO" id="GO:0005886">
    <property type="term" value="C:plasma membrane"/>
    <property type="evidence" value="ECO:0007669"/>
    <property type="project" value="UniProtKB-SubCell"/>
</dbReference>
<dbReference type="GO" id="GO:0045259">
    <property type="term" value="C:proton-transporting ATP synthase complex"/>
    <property type="evidence" value="ECO:0007669"/>
    <property type="project" value="UniProtKB-KW"/>
</dbReference>
<dbReference type="GO" id="GO:0043531">
    <property type="term" value="F:ADP binding"/>
    <property type="evidence" value="ECO:0007669"/>
    <property type="project" value="TreeGrafter"/>
</dbReference>
<dbReference type="GO" id="GO:0005524">
    <property type="term" value="F:ATP binding"/>
    <property type="evidence" value="ECO:0007669"/>
    <property type="project" value="UniProtKB-UniRule"/>
</dbReference>
<dbReference type="GO" id="GO:0046933">
    <property type="term" value="F:proton-transporting ATP synthase activity, rotational mechanism"/>
    <property type="evidence" value="ECO:0007669"/>
    <property type="project" value="UniProtKB-UniRule"/>
</dbReference>
<dbReference type="CDD" id="cd18113">
    <property type="entry name" value="ATP-synt_F1_alpha_C"/>
    <property type="match status" value="1"/>
</dbReference>
<dbReference type="CDD" id="cd18116">
    <property type="entry name" value="ATP-synt_F1_alpha_N"/>
    <property type="match status" value="1"/>
</dbReference>
<dbReference type="CDD" id="cd01132">
    <property type="entry name" value="F1-ATPase_alpha_CD"/>
    <property type="match status" value="1"/>
</dbReference>
<dbReference type="FunFam" id="1.20.150.20:FF:000001">
    <property type="entry name" value="ATP synthase subunit alpha"/>
    <property type="match status" value="1"/>
</dbReference>
<dbReference type="FunFam" id="2.40.30.20:FF:000001">
    <property type="entry name" value="ATP synthase subunit alpha"/>
    <property type="match status" value="1"/>
</dbReference>
<dbReference type="FunFam" id="3.40.50.300:FF:002432">
    <property type="entry name" value="ATP synthase subunit alpha, mitochondrial"/>
    <property type="match status" value="1"/>
</dbReference>
<dbReference type="Gene3D" id="2.40.30.20">
    <property type="match status" value="1"/>
</dbReference>
<dbReference type="Gene3D" id="1.20.150.20">
    <property type="entry name" value="ATP synthase alpha/beta chain, C-terminal domain"/>
    <property type="match status" value="1"/>
</dbReference>
<dbReference type="Gene3D" id="3.40.50.300">
    <property type="entry name" value="P-loop containing nucleotide triphosphate hydrolases"/>
    <property type="match status" value="1"/>
</dbReference>
<dbReference type="HAMAP" id="MF_01346">
    <property type="entry name" value="ATP_synth_alpha_bact"/>
    <property type="match status" value="1"/>
</dbReference>
<dbReference type="InterPro" id="IPR023366">
    <property type="entry name" value="ATP_synth_asu-like_sf"/>
</dbReference>
<dbReference type="InterPro" id="IPR000793">
    <property type="entry name" value="ATP_synth_asu_C"/>
</dbReference>
<dbReference type="InterPro" id="IPR038376">
    <property type="entry name" value="ATP_synth_asu_C_sf"/>
</dbReference>
<dbReference type="InterPro" id="IPR033732">
    <property type="entry name" value="ATP_synth_F1_a_nt-bd_dom"/>
</dbReference>
<dbReference type="InterPro" id="IPR005294">
    <property type="entry name" value="ATP_synth_F1_asu"/>
</dbReference>
<dbReference type="InterPro" id="IPR020003">
    <property type="entry name" value="ATPase_a/bsu_AS"/>
</dbReference>
<dbReference type="InterPro" id="IPR004100">
    <property type="entry name" value="ATPase_F1/V1/A1_a/bsu_N"/>
</dbReference>
<dbReference type="InterPro" id="IPR036121">
    <property type="entry name" value="ATPase_F1/V1/A1_a/bsu_N_sf"/>
</dbReference>
<dbReference type="InterPro" id="IPR000194">
    <property type="entry name" value="ATPase_F1/V1/A1_a/bsu_nucl-bd"/>
</dbReference>
<dbReference type="InterPro" id="IPR027417">
    <property type="entry name" value="P-loop_NTPase"/>
</dbReference>
<dbReference type="NCBIfam" id="TIGR00962">
    <property type="entry name" value="atpA"/>
    <property type="match status" value="1"/>
</dbReference>
<dbReference type="NCBIfam" id="NF009884">
    <property type="entry name" value="PRK13343.1"/>
    <property type="match status" value="1"/>
</dbReference>
<dbReference type="PANTHER" id="PTHR48082">
    <property type="entry name" value="ATP SYNTHASE SUBUNIT ALPHA, MITOCHONDRIAL"/>
    <property type="match status" value="1"/>
</dbReference>
<dbReference type="PANTHER" id="PTHR48082:SF2">
    <property type="entry name" value="ATP SYNTHASE SUBUNIT ALPHA, MITOCHONDRIAL"/>
    <property type="match status" value="1"/>
</dbReference>
<dbReference type="Pfam" id="PF00006">
    <property type="entry name" value="ATP-synt_ab"/>
    <property type="match status" value="1"/>
</dbReference>
<dbReference type="Pfam" id="PF00306">
    <property type="entry name" value="ATP-synt_ab_C"/>
    <property type="match status" value="1"/>
</dbReference>
<dbReference type="Pfam" id="PF02874">
    <property type="entry name" value="ATP-synt_ab_N"/>
    <property type="match status" value="1"/>
</dbReference>
<dbReference type="PIRSF" id="PIRSF039088">
    <property type="entry name" value="F_ATPase_subunit_alpha"/>
    <property type="match status" value="1"/>
</dbReference>
<dbReference type="SUPFAM" id="SSF47917">
    <property type="entry name" value="C-terminal domain of alpha and beta subunits of F1 ATP synthase"/>
    <property type="match status" value="1"/>
</dbReference>
<dbReference type="SUPFAM" id="SSF50615">
    <property type="entry name" value="N-terminal domain of alpha and beta subunits of F1 ATP synthase"/>
    <property type="match status" value="1"/>
</dbReference>
<dbReference type="SUPFAM" id="SSF52540">
    <property type="entry name" value="P-loop containing nucleoside triphosphate hydrolases"/>
    <property type="match status" value="1"/>
</dbReference>
<dbReference type="PROSITE" id="PS00152">
    <property type="entry name" value="ATPASE_ALPHA_BETA"/>
    <property type="match status" value="1"/>
</dbReference>
<comment type="function">
    <text evidence="1">Produces ATP from ADP in the presence of a proton gradient across the membrane. The alpha chain is a regulatory subunit.</text>
</comment>
<comment type="catalytic activity">
    <reaction evidence="1">
        <text>ATP + H2O + 4 H(+)(in) = ADP + phosphate + 5 H(+)(out)</text>
        <dbReference type="Rhea" id="RHEA:57720"/>
        <dbReference type="ChEBI" id="CHEBI:15377"/>
        <dbReference type="ChEBI" id="CHEBI:15378"/>
        <dbReference type="ChEBI" id="CHEBI:30616"/>
        <dbReference type="ChEBI" id="CHEBI:43474"/>
        <dbReference type="ChEBI" id="CHEBI:456216"/>
        <dbReference type="EC" id="7.1.2.2"/>
    </reaction>
</comment>
<comment type="subunit">
    <text evidence="1">F-type ATPases have 2 components, CF(1) - the catalytic core - and CF(0) - the membrane proton channel. CF(1) has five subunits: alpha(3), beta(3), gamma(1), delta(1), epsilon(1). CF(0) has three main subunits: a(1), b(2) and c(9-12). The alpha and beta chains form an alternating ring which encloses part of the gamma chain. CF(1) is attached to CF(0) by a central stalk formed by the gamma and epsilon chains, while a peripheral stalk is formed by the delta and b chains.</text>
</comment>
<comment type="subcellular location">
    <subcellularLocation>
        <location evidence="1">Cell inner membrane</location>
        <topology evidence="1">Peripheral membrane protein</topology>
    </subcellularLocation>
</comment>
<comment type="similarity">
    <text evidence="1">Belongs to the ATPase alpha/beta chains family.</text>
</comment>
<evidence type="ECO:0000255" key="1">
    <source>
        <dbReference type="HAMAP-Rule" id="MF_01346"/>
    </source>
</evidence>
<keyword id="KW-0066">ATP synthesis</keyword>
<keyword id="KW-0067">ATP-binding</keyword>
<keyword id="KW-0997">Cell inner membrane</keyword>
<keyword id="KW-1003">Cell membrane</keyword>
<keyword id="KW-0139">CF(1)</keyword>
<keyword id="KW-0375">Hydrogen ion transport</keyword>
<keyword id="KW-0406">Ion transport</keyword>
<keyword id="KW-0472">Membrane</keyword>
<keyword id="KW-0547">Nucleotide-binding</keyword>
<keyword id="KW-1185">Reference proteome</keyword>
<keyword id="KW-1278">Translocase</keyword>
<keyword id="KW-0813">Transport</keyword>
<name>ATPA_NITHX</name>
<organism>
    <name type="scientific">Nitrobacter hamburgensis (strain DSM 10229 / NCIMB 13809 / X14)</name>
    <dbReference type="NCBI Taxonomy" id="323097"/>
    <lineage>
        <taxon>Bacteria</taxon>
        <taxon>Pseudomonadati</taxon>
        <taxon>Pseudomonadota</taxon>
        <taxon>Alphaproteobacteria</taxon>
        <taxon>Hyphomicrobiales</taxon>
        <taxon>Nitrobacteraceae</taxon>
        <taxon>Nitrobacter</taxon>
    </lineage>
</organism>
<gene>
    <name evidence="1" type="primary">atpA</name>
    <name type="ordered locus">Nham_0532</name>
</gene>
<protein>
    <recommendedName>
        <fullName evidence="1">ATP synthase subunit alpha</fullName>
        <ecNumber evidence="1">7.1.2.2</ecNumber>
    </recommendedName>
    <alternativeName>
        <fullName evidence="1">ATP synthase F1 sector subunit alpha</fullName>
    </alternativeName>
    <alternativeName>
        <fullName evidence="1">F-ATPase subunit alpha</fullName>
    </alternativeName>
</protein>